<sequence>MLLPCALLAALLAAGHAANPCCSLPCQNRGVCMTTGFDRYECDCTRTGYYGENCTTPEFFTWLKLILKPTPNTVHYILTHFKGVWNIINNISFLRDTIMRYVLTSRSHLIDSPPTYNSDYSYKSWEAYSNLSYYTRSLPPVGHDCPTPMGVKGKKELPDSKLIVEKFLLRRKFIPDPQGTNVMFTFFAQHFTHQFFKTDHKKGPGFTKAYGHGVDLNHIYGETLERQLKLRLRKDGKLKYQMIDGEMYPPTVKDTQAEMIYPPHVPEHLQFSVGQEVFGLVPGLMMYATIWLREHNRVCDVLKQEHPEWDDEQLFQTTRLILIGETIKIVIEDYVQHLSGYHFKLKFDPELLFNQRFQYQNRIAAEFNTLYHWHPLLPDTFQIHNQEYTFQQFLYNNSIMLEHGLSHMVKSFSKQSAGRVAGGKNVPAAVQKVAKASIDQSRQMRYQSLNEYRKRFMLKPFKSFEELTGEKEMAAELEELYGDIDAMELYPGLLVEKPRPGAIFGETMVEIGAPFSLKGLMGNTICSPEYWKPSTFGGKVGFEIINTASLQKLICNNVKGCPFTAFHVLNPEPTEATINVSTSNTAMEDINPTLLLKEQSAEL</sequence>
<proteinExistence type="evidence at transcript level"/>
<accession>P27607</accession>
<protein>
    <recommendedName>
        <fullName>Prostaglandin G/H synthase 2</fullName>
        <ecNumber>1.14.99.1</ecNumber>
    </recommendedName>
    <alternativeName>
        <fullName>Cyclooxygenase-2</fullName>
        <shortName>COX-2</shortName>
    </alternativeName>
    <alternativeName>
        <fullName>Mitogen-inducible PGHS</fullName>
    </alternativeName>
    <alternativeName>
        <fullName>PHS II</fullName>
    </alternativeName>
    <alternativeName>
        <fullName>Prostaglandin H2 synthase 2</fullName>
        <shortName>PGH synthase 2</shortName>
        <shortName>PGHS-2</shortName>
    </alternativeName>
    <alternativeName>
        <fullName>Prostaglandin-endoperoxide synthase 2</fullName>
    </alternativeName>
</protein>
<organism>
    <name type="scientific">Gallus gallus</name>
    <name type="common">Chicken</name>
    <dbReference type="NCBI Taxonomy" id="9031"/>
    <lineage>
        <taxon>Eukaryota</taxon>
        <taxon>Metazoa</taxon>
        <taxon>Chordata</taxon>
        <taxon>Craniata</taxon>
        <taxon>Vertebrata</taxon>
        <taxon>Euteleostomi</taxon>
        <taxon>Archelosauria</taxon>
        <taxon>Archosauria</taxon>
        <taxon>Dinosauria</taxon>
        <taxon>Saurischia</taxon>
        <taxon>Theropoda</taxon>
        <taxon>Coelurosauria</taxon>
        <taxon>Aves</taxon>
        <taxon>Neognathae</taxon>
        <taxon>Galloanserae</taxon>
        <taxon>Galliformes</taxon>
        <taxon>Phasianidae</taxon>
        <taxon>Phasianinae</taxon>
        <taxon>Gallus</taxon>
    </lineage>
</organism>
<dbReference type="EC" id="1.14.99.1"/>
<dbReference type="EMBL" id="M64990">
    <property type="protein sequence ID" value="AAA49050.1"/>
    <property type="molecule type" value="mRNA"/>
</dbReference>
<dbReference type="PIR" id="A38630">
    <property type="entry name" value="A38630"/>
</dbReference>
<dbReference type="RefSeq" id="NP_001161190.1">
    <property type="nucleotide sequence ID" value="NM_001167718.1"/>
</dbReference>
<dbReference type="RefSeq" id="NP_001161191.1">
    <property type="nucleotide sequence ID" value="NM_001167719.2"/>
</dbReference>
<dbReference type="SMR" id="P27607"/>
<dbReference type="FunCoup" id="P27607">
    <property type="interactions" value="95"/>
</dbReference>
<dbReference type="STRING" id="9031.ENSGALP00000054566"/>
<dbReference type="PeroxiBase" id="4107">
    <property type="entry name" value="GgaPGHS02"/>
</dbReference>
<dbReference type="GlyCosmos" id="P27607">
    <property type="glycosylation" value="3 sites, No reported glycans"/>
</dbReference>
<dbReference type="GlyGen" id="P27607">
    <property type="glycosylation" value="3 sites"/>
</dbReference>
<dbReference type="PaxDb" id="9031-ENSGALP00000040835"/>
<dbReference type="Ensembl" id="ENSGALT00010050928.1">
    <property type="protein sequence ID" value="ENSGALP00010030119.1"/>
    <property type="gene ID" value="ENSGALG00010021038.1"/>
</dbReference>
<dbReference type="GeneID" id="396451"/>
<dbReference type="KEGG" id="gga:396451"/>
<dbReference type="CTD" id="5743"/>
<dbReference type="VEuPathDB" id="HostDB:geneid_396451"/>
<dbReference type="eggNOG" id="KOG2408">
    <property type="taxonomic scope" value="Eukaryota"/>
</dbReference>
<dbReference type="GeneTree" id="ENSGT00390000010743"/>
<dbReference type="HOGENOM" id="CLU_022428_0_0_1"/>
<dbReference type="InParanoid" id="P27607"/>
<dbReference type="OMA" id="MIYPPHI"/>
<dbReference type="OrthoDB" id="823504at2759"/>
<dbReference type="PhylomeDB" id="P27607"/>
<dbReference type="TreeFam" id="TF329675"/>
<dbReference type="Reactome" id="R-GGA-197264">
    <property type="pathway name" value="Nicotinamide salvaging"/>
</dbReference>
<dbReference type="Reactome" id="R-GGA-2142770">
    <property type="pathway name" value="Synthesis of 15-eicosatetraenoic acid derivatives"/>
</dbReference>
<dbReference type="Reactome" id="R-GGA-2162123">
    <property type="pathway name" value="Synthesis of Prostaglandins (PG) and Thromboxanes (TX)"/>
</dbReference>
<dbReference type="Reactome" id="R-GGA-9018677">
    <property type="pathway name" value="Biosynthesis of DHA-derived SPMs"/>
</dbReference>
<dbReference type="Reactome" id="R-GGA-9018679">
    <property type="pathway name" value="Biosynthesis of EPA-derived SPMs"/>
</dbReference>
<dbReference type="Reactome" id="R-GGA-9025094">
    <property type="pathway name" value="Biosynthesis of DPAn-3 SPMs"/>
</dbReference>
<dbReference type="Reactome" id="R-GGA-9027604">
    <property type="pathway name" value="Biosynthesis of electrophilic Omega-3 PUFA oxo-derivatives"/>
</dbReference>
<dbReference type="UniPathway" id="UPA00662"/>
<dbReference type="PRO" id="PR:P27607"/>
<dbReference type="Proteomes" id="UP000000539">
    <property type="component" value="Chromosome 8"/>
</dbReference>
<dbReference type="Bgee" id="ENSGALG00000033635">
    <property type="expression patterns" value="Expressed in spermatocyte and 12 other cell types or tissues"/>
</dbReference>
<dbReference type="GO" id="GO:0005737">
    <property type="term" value="C:cytoplasm"/>
    <property type="evidence" value="ECO:0000250"/>
    <property type="project" value="UniProtKB"/>
</dbReference>
<dbReference type="GO" id="GO:0005789">
    <property type="term" value="C:endoplasmic reticulum membrane"/>
    <property type="evidence" value="ECO:0007669"/>
    <property type="project" value="UniProtKB-SubCell"/>
</dbReference>
<dbReference type="GO" id="GO:0043005">
    <property type="term" value="C:neuron projection"/>
    <property type="evidence" value="ECO:0000318"/>
    <property type="project" value="GO_Central"/>
</dbReference>
<dbReference type="GO" id="GO:0020037">
    <property type="term" value="F:heme binding"/>
    <property type="evidence" value="ECO:0000250"/>
    <property type="project" value="UniProtKB"/>
</dbReference>
<dbReference type="GO" id="GO:0046872">
    <property type="term" value="F:metal ion binding"/>
    <property type="evidence" value="ECO:0007669"/>
    <property type="project" value="UniProtKB-KW"/>
</dbReference>
<dbReference type="GO" id="GO:0016702">
    <property type="term" value="F:oxidoreductase activity, acting on single donors with incorporation of molecular oxygen, incorporation of two atoms of oxygen"/>
    <property type="evidence" value="ECO:0000318"/>
    <property type="project" value="GO_Central"/>
</dbReference>
<dbReference type="GO" id="GO:0004601">
    <property type="term" value="F:peroxidase activity"/>
    <property type="evidence" value="ECO:0007669"/>
    <property type="project" value="UniProtKB-KW"/>
</dbReference>
<dbReference type="GO" id="GO:0004666">
    <property type="term" value="F:prostaglandin-endoperoxide synthase activity"/>
    <property type="evidence" value="ECO:0000250"/>
    <property type="project" value="UniProtKB"/>
</dbReference>
<dbReference type="GO" id="GO:0019371">
    <property type="term" value="P:cyclooxygenase pathway"/>
    <property type="evidence" value="ECO:0000250"/>
    <property type="project" value="UniProtKB"/>
</dbReference>
<dbReference type="GO" id="GO:0001516">
    <property type="term" value="P:prostaglandin biosynthetic process"/>
    <property type="evidence" value="ECO:0000250"/>
    <property type="project" value="UniProtKB"/>
</dbReference>
<dbReference type="GO" id="GO:0008217">
    <property type="term" value="P:regulation of blood pressure"/>
    <property type="evidence" value="ECO:0000250"/>
    <property type="project" value="UniProtKB"/>
</dbReference>
<dbReference type="GO" id="GO:0006979">
    <property type="term" value="P:response to oxidative stress"/>
    <property type="evidence" value="ECO:0007669"/>
    <property type="project" value="InterPro"/>
</dbReference>
<dbReference type="CDD" id="cd00054">
    <property type="entry name" value="EGF_CA"/>
    <property type="match status" value="1"/>
</dbReference>
<dbReference type="CDD" id="cd09816">
    <property type="entry name" value="prostaglandin_endoperoxide_synthase"/>
    <property type="match status" value="1"/>
</dbReference>
<dbReference type="FunFam" id="1.10.640.10:FF:000002">
    <property type="entry name" value="Prostaglandin G/H synthase 2"/>
    <property type="match status" value="1"/>
</dbReference>
<dbReference type="FunFam" id="2.10.25.10:FF:000235">
    <property type="entry name" value="Prostaglandin G/H synthase 2"/>
    <property type="match status" value="1"/>
</dbReference>
<dbReference type="Gene3D" id="1.10.640.10">
    <property type="entry name" value="Haem peroxidase domain superfamily, animal type"/>
    <property type="match status" value="1"/>
</dbReference>
<dbReference type="Gene3D" id="2.10.25.10">
    <property type="entry name" value="Laminin"/>
    <property type="match status" value="1"/>
</dbReference>
<dbReference type="InterPro" id="IPR000742">
    <property type="entry name" value="EGF-like_dom"/>
</dbReference>
<dbReference type="InterPro" id="IPR019791">
    <property type="entry name" value="Haem_peroxidase_animal"/>
</dbReference>
<dbReference type="InterPro" id="IPR010255">
    <property type="entry name" value="Haem_peroxidase_sf"/>
</dbReference>
<dbReference type="InterPro" id="IPR037120">
    <property type="entry name" value="Haem_peroxidase_sf_animal"/>
</dbReference>
<dbReference type="InterPro" id="IPR050783">
    <property type="entry name" value="Oxylipin_biosynth_metab"/>
</dbReference>
<dbReference type="PANTHER" id="PTHR11903">
    <property type="entry name" value="PROSTAGLANDIN G/H SYNTHASE"/>
    <property type="match status" value="1"/>
</dbReference>
<dbReference type="PANTHER" id="PTHR11903:SF8">
    <property type="entry name" value="PROSTAGLANDIN G_H SYNTHASE 2"/>
    <property type="match status" value="1"/>
</dbReference>
<dbReference type="Pfam" id="PF03098">
    <property type="entry name" value="An_peroxidase"/>
    <property type="match status" value="1"/>
</dbReference>
<dbReference type="PRINTS" id="PR00457">
    <property type="entry name" value="ANPEROXIDASE"/>
</dbReference>
<dbReference type="SUPFAM" id="SSF57196">
    <property type="entry name" value="EGF/Laminin"/>
    <property type="match status" value="1"/>
</dbReference>
<dbReference type="SUPFAM" id="SSF48113">
    <property type="entry name" value="Heme-dependent peroxidases"/>
    <property type="match status" value="1"/>
</dbReference>
<dbReference type="PROSITE" id="PS50026">
    <property type="entry name" value="EGF_3"/>
    <property type="match status" value="1"/>
</dbReference>
<dbReference type="PROSITE" id="PS50292">
    <property type="entry name" value="PEROXIDASE_3"/>
    <property type="match status" value="1"/>
</dbReference>
<comment type="function">
    <text evidence="1 2 3">Dual cyclooxygenase and peroxidase in the biosynthesis pathway of prostanoids, a class of C20 oxylipins mainly derived from arachidonate ((5Z,8Z,11Z,14Z)-eicosatetraenoate, AA, C20:4(n-6)), with a particular role in the inflammatory response. The cyclooxygenase activity oxygenates AA to the hydroperoxy endoperoxide prostaglandin G2 (PGG2), and the peroxidase activity reduces PGG2 to the hydroxy endoperoxide prostaglandin H2 (PGH2), the precursor of all 2-series prostaglandins and thromboxanes. This complex transformation is initiated by abstraction of hydrogen at carbon 13 (with S-stereochemistry), followed by insertion of molecular O2 to form the endoperoxide bridge between carbon 9 and 11 that defines prostaglandins. The insertion of a second molecule of O2 (bis-oxygenase activity) yields a hydroperoxy group in PGG2 that is then reduced to PGH2 by two electrons. Similarly catalyzes successive cyclooxygenation and peroxidation of dihomo-gamma-linoleate (DGLA, C20:3(n-6)) and eicosapentaenoate (EPA, C20:5(n-3)) to corresponding PGH1 and PGH3, the precursors of 1- and 3-series prostaglandins. In an alternative pathway of prostanoid biosynthesis, converts 2-arachidonoyl lysophopholipids to prostanoid lysophopholipids, which are then hydrolyzed by intracellular phospholipases to release free prostanoids. Metabolizes 2-arachidonoyl glycerol yielding the glyceryl ester of PGH2, a process that can contribute to pain response. Generates lipid mediators from n-3 and n-6 polyunsaturated fatty acids (PUFAs) via a lipoxygenase-type mechanism. Oxygenates PUFAs to hydroperoxy compounds and then reduces them to corresponding alcohols. Plays a role in the generation of resolution phase interaction products (resolvins) during both sterile and infectious inflammation. Metabolizes docosahexaenoate (DHA, C22:6(n-3)) to 17R-HDHA, a precursor of the D-series resolvins (RvDs). As a component of the biosynthetic pathway of E-series resolvins (RvEs), converts eicosapentaenoate (EPA, C20:5(n-3)) primarily to 18S-HEPE that is further metabolized by ALOX5 and LTA4H to generate 18S-RvE1 and 18S-RvE2. In vascular endothelial cells, converts docosapentaenoate (DPA, C22:5(n-3)) to 13R-HDPA, a precursor for 13-series resolvins (RvTs) shown to activate macrophage phagocytosis during bacterial infection. In activated leukocytes, contributes to oxygenation of hydroxyeicosatetraenoates (HETE) to diHETES (5,15-diHETE and 5,11-diHETE). Can also use linoleate (LA, (9Z,12Z)-octadecadienoate, C18:2(n-6)) as substrate and produce hydroxyoctadecadienoates (HODEs) in a regio- and stereospecific manner, being (9R)-HODE ((9R)-hydroxy-(10E,12Z)-octadecadienoate) and (13S)-HODE ((13S)-hydroxy-(9Z,11E)-octadecadienoate) its major products (By similarity). During neuroinflammation, plays a role in neuronal secretion of specialized preresolving mediators (SPMs) 15R-lipoxin A4 that regulates phagocytic microglia (By similarity).</text>
</comment>
<comment type="catalytic activity">
    <reaction evidence="3">
        <text>(5Z,8Z,11Z,14Z)-eicosatetraenoate + AH2 + 2 O2 = prostaglandin H2 + A + H2O</text>
        <dbReference type="Rhea" id="RHEA:23728"/>
        <dbReference type="ChEBI" id="CHEBI:13193"/>
        <dbReference type="ChEBI" id="CHEBI:15377"/>
        <dbReference type="ChEBI" id="CHEBI:15379"/>
        <dbReference type="ChEBI" id="CHEBI:17499"/>
        <dbReference type="ChEBI" id="CHEBI:32395"/>
        <dbReference type="ChEBI" id="CHEBI:57405"/>
        <dbReference type="EC" id="1.14.99.1"/>
    </reaction>
</comment>
<comment type="catalytic activity">
    <reaction evidence="2">
        <text>(9Z,12Z)-octadecadienoate + AH2 + O2 = (9R)-hydroxy-(10E,12Z)-octadecadienoate + A + H2O</text>
        <dbReference type="Rhea" id="RHEA:75447"/>
        <dbReference type="ChEBI" id="CHEBI:13193"/>
        <dbReference type="ChEBI" id="CHEBI:15377"/>
        <dbReference type="ChEBI" id="CHEBI:15379"/>
        <dbReference type="ChEBI" id="CHEBI:17499"/>
        <dbReference type="ChEBI" id="CHEBI:30245"/>
        <dbReference type="ChEBI" id="CHEBI:77895"/>
    </reaction>
    <physiologicalReaction direction="left-to-right" evidence="2">
        <dbReference type="Rhea" id="RHEA:75448"/>
    </physiologicalReaction>
</comment>
<comment type="catalytic activity">
    <reaction evidence="2">
        <text>(9Z,12Z)-octadecadienoate + AH2 + O2 = (9S)-hydroxy-(10E,12Z)-octadecadienoate + A + H2O</text>
        <dbReference type="Rhea" id="RHEA:75459"/>
        <dbReference type="ChEBI" id="CHEBI:13193"/>
        <dbReference type="ChEBI" id="CHEBI:15377"/>
        <dbReference type="ChEBI" id="CHEBI:15379"/>
        <dbReference type="ChEBI" id="CHEBI:17499"/>
        <dbReference type="ChEBI" id="CHEBI:30245"/>
        <dbReference type="ChEBI" id="CHEBI:77852"/>
    </reaction>
    <physiologicalReaction direction="left-to-right" evidence="2">
        <dbReference type="Rhea" id="RHEA:75460"/>
    </physiologicalReaction>
</comment>
<comment type="catalytic activity">
    <reaction evidence="2">
        <text>(9Z,12Z)-octadecadienoate + AH2 + O2 = (13S)-hydroxy-(9Z,11E)-octadecadienoate + A + H2O</text>
        <dbReference type="Rhea" id="RHEA:75451"/>
        <dbReference type="ChEBI" id="CHEBI:13193"/>
        <dbReference type="ChEBI" id="CHEBI:15377"/>
        <dbReference type="ChEBI" id="CHEBI:15379"/>
        <dbReference type="ChEBI" id="CHEBI:17499"/>
        <dbReference type="ChEBI" id="CHEBI:30245"/>
        <dbReference type="ChEBI" id="CHEBI:90850"/>
    </reaction>
    <physiologicalReaction direction="left-to-right" evidence="2">
        <dbReference type="Rhea" id="RHEA:75452"/>
    </physiologicalReaction>
</comment>
<comment type="catalytic activity">
    <reaction evidence="2">
        <text>(9Z,12Z)-octadecadienoate + AH2 + O2 = (13R)-hydroxy-(9Z,11E)-octadecadienoate + A + H2O</text>
        <dbReference type="Rhea" id="RHEA:75455"/>
        <dbReference type="ChEBI" id="CHEBI:13193"/>
        <dbReference type="ChEBI" id="CHEBI:15377"/>
        <dbReference type="ChEBI" id="CHEBI:15379"/>
        <dbReference type="ChEBI" id="CHEBI:17499"/>
        <dbReference type="ChEBI" id="CHEBI:30245"/>
        <dbReference type="ChEBI" id="CHEBI:136655"/>
    </reaction>
    <physiologicalReaction direction="left-to-right" evidence="2">
        <dbReference type="Rhea" id="RHEA:75456"/>
    </physiologicalReaction>
</comment>
<comment type="cofactor">
    <cofactor evidence="3">
        <name>heme b</name>
        <dbReference type="ChEBI" id="CHEBI:60344"/>
    </cofactor>
    <text evidence="3">Binds 1 heme b (iron(II)-protoporphyrin IX) group per subunit.</text>
</comment>
<comment type="pathway">
    <text evidence="1">Lipid metabolism; prostaglandin biosynthesis.</text>
</comment>
<comment type="subunit">
    <text evidence="3">Homodimer.</text>
</comment>
<comment type="subcellular location">
    <subcellularLocation>
        <location>Microsome membrane</location>
        <topology>Peripheral membrane protein</topology>
    </subcellularLocation>
    <subcellularLocation>
        <location>Endoplasmic reticulum membrane</location>
        <topology>Peripheral membrane protein</topology>
    </subcellularLocation>
</comment>
<comment type="induction">
    <text>By cytokines and mitogens.</text>
</comment>
<comment type="miscellaneous">
    <text>The conversion of arachidonate to prostaglandin H2 is a 2 step reaction: a cyclooxygenase (COX) reaction which converts arachidonate to prostaglandin G2 (PGG2) and a peroxidase reaction in which PGG2 is reduced to prostaglandin H2 (PGH2). The cyclooxygenase reaction occurs in a hydrophobic channel in the core of the enzyme. The peroxidase reaction occurs at a heme-containing active site located near the protein surface. The nonsteroidal anti-inflammatory drugs (NSAIDs) binding site corresponds to the cyclooxygenase active site.</text>
</comment>
<comment type="miscellaneous">
    <text>Conversion of arachidonate to prostaglandin H2 is mediated by 2 different isozymes: the constitutive PTGS1 and the inducible PTGS2. PTGS1 is expressed constitutively and generally produces prostanoids acutely in response to hormonal stimuli to fine-tune physiological processes requiring instantaneous, continuous regulation (e.g. hemostasis). PTGS2 is inducible and typically produces prostanoids that mediate responses to physiological stresses such as infection and inflammation.</text>
</comment>
<comment type="miscellaneous">
    <text>PTGS1 and PTGS2 are the targets of nonsteroidal anti-inflammatory drugs (NSAIDs) including aspirin and ibuprofen. Aspirin is able to produce an irreversible inactivation of the enzyme through a serine acetylation. Inhibition of the PGHSs with NSAIDs acutely reduces inflammation, pain, and fever, and long-term use of these drugs reduces fatal thrombotic events, as well as the development of colon cancer and Alzheimer's disease. PTGS2 is the principal isozyme responsible for production of inflammatory prostaglandins. New generation PTGSs inhibitors strive to be selective for PTGS2, to avoid side effects such as gastrointestinal complications and ulceration.</text>
</comment>
<comment type="similarity">
    <text evidence="7">Belongs to the prostaglandin G/H synthase family.</text>
</comment>
<feature type="signal peptide" evidence="4">
    <location>
        <begin position="1"/>
        <end position="17"/>
    </location>
</feature>
<feature type="chain" id="PRO_0000023881" description="Prostaglandin G/H synthase 2">
    <location>
        <begin position="18"/>
        <end position="603"/>
    </location>
</feature>
<feature type="domain" description="EGF-like" evidence="5">
    <location>
        <begin position="18"/>
        <end position="55"/>
    </location>
</feature>
<feature type="active site" description="Proton acceptor" evidence="6">
    <location>
        <position position="193"/>
    </location>
</feature>
<feature type="active site" description="For cyclooxygenase activity" evidence="3">
    <location>
        <position position="371"/>
    </location>
</feature>
<feature type="binding site" evidence="3">
    <location>
        <position position="106"/>
    </location>
    <ligand>
        <name>substrate</name>
    </ligand>
</feature>
<feature type="binding site" evidence="3">
    <location>
        <position position="341"/>
    </location>
    <ligand>
        <name>substrate</name>
    </ligand>
</feature>
<feature type="binding site" description="axial binding residue" evidence="6">
    <location>
        <position position="374"/>
    </location>
    <ligand>
        <name>heme b</name>
        <dbReference type="ChEBI" id="CHEBI:60344"/>
    </ligand>
    <ligandPart>
        <name>Fe</name>
        <dbReference type="ChEBI" id="CHEBI:18248"/>
    </ligandPart>
</feature>
<feature type="site" description="Aspirin-acetylated serine" evidence="1">
    <location>
        <position position="516"/>
    </location>
</feature>
<feature type="glycosylation site" description="N-linked (GlcNAc...) asparagine" evidence="4">
    <location>
        <position position="53"/>
    </location>
</feature>
<feature type="glycosylation site" description="N-linked (GlcNAc...) asparagine" evidence="4">
    <location>
        <position position="90"/>
    </location>
</feature>
<feature type="glycosylation site" description="N-linked (GlcNAc...) asparagine" evidence="4">
    <location>
        <position position="130"/>
    </location>
</feature>
<feature type="disulfide bond" evidence="3">
    <location>
        <begin position="21"/>
        <end position="32"/>
    </location>
</feature>
<feature type="disulfide bond" evidence="3">
    <location>
        <begin position="22"/>
        <end position="145"/>
    </location>
</feature>
<feature type="disulfide bond" evidence="3">
    <location>
        <begin position="26"/>
        <end position="42"/>
    </location>
</feature>
<feature type="disulfide bond" evidence="3">
    <location>
        <begin position="44"/>
        <end position="54"/>
    </location>
</feature>
<feature type="disulfide bond" evidence="3">
    <location>
        <begin position="555"/>
        <end position="561"/>
    </location>
</feature>
<reference key="1">
    <citation type="journal article" date="1991" name="Proc. Natl. Acad. Sci. U.S.A.">
        <title>Expression of a mitogen-responsive gene encoding prostaglandin synthase is regulated by mRNA splicing.</title>
        <authorList>
            <person name="Xie W."/>
            <person name="Chipman J.G."/>
            <person name="Robertson D.L."/>
            <person name="Erikson R.L."/>
            <person name="Simmons D.L."/>
        </authorList>
    </citation>
    <scope>NUCLEOTIDE SEQUENCE [MRNA]</scope>
</reference>
<keyword id="KW-0223">Dioxygenase</keyword>
<keyword id="KW-1015">Disulfide bond</keyword>
<keyword id="KW-0256">Endoplasmic reticulum</keyword>
<keyword id="KW-0275">Fatty acid biosynthesis</keyword>
<keyword id="KW-0276">Fatty acid metabolism</keyword>
<keyword id="KW-0325">Glycoprotein</keyword>
<keyword id="KW-0349">Heme</keyword>
<keyword id="KW-0408">Iron</keyword>
<keyword id="KW-0444">Lipid biosynthesis</keyword>
<keyword id="KW-0443">Lipid metabolism</keyword>
<keyword id="KW-0472">Membrane</keyword>
<keyword id="KW-0479">Metal-binding</keyword>
<keyword id="KW-0492">Microsome</keyword>
<keyword id="KW-0560">Oxidoreductase</keyword>
<keyword id="KW-0575">Peroxidase</keyword>
<keyword id="KW-0643">Prostaglandin biosynthesis</keyword>
<keyword id="KW-0644">Prostaglandin metabolism</keyword>
<keyword id="KW-1185">Reference proteome</keyword>
<keyword id="KW-0732">Signal</keyword>
<gene>
    <name type="primary">PTGS2</name>
    <name type="synonym">CEF-147</name>
</gene>
<name>PGH2_CHICK</name>
<evidence type="ECO:0000250" key="1">
    <source>
        <dbReference type="UniProtKB" id="P35354"/>
    </source>
</evidence>
<evidence type="ECO:0000250" key="2">
    <source>
        <dbReference type="UniProtKB" id="P79208"/>
    </source>
</evidence>
<evidence type="ECO:0000250" key="3">
    <source>
        <dbReference type="UniProtKB" id="Q05769"/>
    </source>
</evidence>
<evidence type="ECO:0000255" key="4"/>
<evidence type="ECO:0000255" key="5">
    <source>
        <dbReference type="PROSITE-ProRule" id="PRU00076"/>
    </source>
</evidence>
<evidence type="ECO:0000255" key="6">
    <source>
        <dbReference type="PROSITE-ProRule" id="PRU00298"/>
    </source>
</evidence>
<evidence type="ECO:0000305" key="7"/>